<sequence>MEQKRGMRKTRIGVVVSDKMDKTVVVAVETLVQHPLYKKTIKRTTKFKAHDENNECRVGDKVLIMETRPLSKEKRWRVVQILERAK</sequence>
<protein>
    <recommendedName>
        <fullName evidence="1">Small ribosomal subunit protein uS17</fullName>
    </recommendedName>
    <alternativeName>
        <fullName evidence="2">30S ribosomal protein S17</fullName>
    </alternativeName>
</protein>
<feature type="chain" id="PRO_1000054931" description="Small ribosomal subunit protein uS17">
    <location>
        <begin position="1"/>
        <end position="86"/>
    </location>
</feature>
<organism>
    <name type="scientific">Caldicellulosiruptor saccharolyticus (strain ATCC 43494 / DSM 8903 / Tp8T 6331)</name>
    <dbReference type="NCBI Taxonomy" id="351627"/>
    <lineage>
        <taxon>Bacteria</taxon>
        <taxon>Bacillati</taxon>
        <taxon>Bacillota</taxon>
        <taxon>Bacillota incertae sedis</taxon>
        <taxon>Caldicellulosiruptorales</taxon>
        <taxon>Caldicellulosiruptoraceae</taxon>
        <taxon>Caldicellulosiruptor</taxon>
    </lineage>
</organism>
<gene>
    <name evidence="1" type="primary">rpsQ</name>
    <name type="ordered locus">Csac_2278</name>
</gene>
<keyword id="KW-0687">Ribonucleoprotein</keyword>
<keyword id="KW-0689">Ribosomal protein</keyword>
<keyword id="KW-0694">RNA-binding</keyword>
<keyword id="KW-0699">rRNA-binding</keyword>
<comment type="function">
    <text evidence="1">One of the primary rRNA binding proteins, it binds specifically to the 5'-end of 16S ribosomal RNA.</text>
</comment>
<comment type="subunit">
    <text evidence="1">Part of the 30S ribosomal subunit.</text>
</comment>
<comment type="similarity">
    <text evidence="1">Belongs to the universal ribosomal protein uS17 family.</text>
</comment>
<name>RS17_CALS8</name>
<dbReference type="EMBL" id="CP000679">
    <property type="protein sequence ID" value="ABP67856.1"/>
    <property type="molecule type" value="Genomic_DNA"/>
</dbReference>
<dbReference type="RefSeq" id="WP_011917782.1">
    <property type="nucleotide sequence ID" value="NC_009437.1"/>
</dbReference>
<dbReference type="SMR" id="A4XLS1"/>
<dbReference type="STRING" id="351627.Csac_2278"/>
<dbReference type="KEGG" id="csc:Csac_2278"/>
<dbReference type="eggNOG" id="COG0186">
    <property type="taxonomic scope" value="Bacteria"/>
</dbReference>
<dbReference type="HOGENOM" id="CLU_073626_1_0_9"/>
<dbReference type="OrthoDB" id="9811714at2"/>
<dbReference type="Proteomes" id="UP000000256">
    <property type="component" value="Chromosome"/>
</dbReference>
<dbReference type="GO" id="GO:0022627">
    <property type="term" value="C:cytosolic small ribosomal subunit"/>
    <property type="evidence" value="ECO:0007669"/>
    <property type="project" value="TreeGrafter"/>
</dbReference>
<dbReference type="GO" id="GO:0019843">
    <property type="term" value="F:rRNA binding"/>
    <property type="evidence" value="ECO:0007669"/>
    <property type="project" value="UniProtKB-UniRule"/>
</dbReference>
<dbReference type="GO" id="GO:0003735">
    <property type="term" value="F:structural constituent of ribosome"/>
    <property type="evidence" value="ECO:0007669"/>
    <property type="project" value="InterPro"/>
</dbReference>
<dbReference type="GO" id="GO:0006412">
    <property type="term" value="P:translation"/>
    <property type="evidence" value="ECO:0007669"/>
    <property type="project" value="UniProtKB-UniRule"/>
</dbReference>
<dbReference type="CDD" id="cd00364">
    <property type="entry name" value="Ribosomal_uS17"/>
    <property type="match status" value="1"/>
</dbReference>
<dbReference type="FunFam" id="2.40.50.140:FF:000123">
    <property type="entry name" value="30S ribosomal protein S17"/>
    <property type="match status" value="1"/>
</dbReference>
<dbReference type="Gene3D" id="2.40.50.140">
    <property type="entry name" value="Nucleic acid-binding proteins"/>
    <property type="match status" value="1"/>
</dbReference>
<dbReference type="HAMAP" id="MF_01345_B">
    <property type="entry name" value="Ribosomal_uS17_B"/>
    <property type="match status" value="1"/>
</dbReference>
<dbReference type="InterPro" id="IPR012340">
    <property type="entry name" value="NA-bd_OB-fold"/>
</dbReference>
<dbReference type="InterPro" id="IPR000266">
    <property type="entry name" value="Ribosomal_uS17"/>
</dbReference>
<dbReference type="InterPro" id="IPR019984">
    <property type="entry name" value="Ribosomal_uS17_bact/chlr"/>
</dbReference>
<dbReference type="InterPro" id="IPR019979">
    <property type="entry name" value="Ribosomal_uS17_CS"/>
</dbReference>
<dbReference type="NCBIfam" id="NF004123">
    <property type="entry name" value="PRK05610.1"/>
    <property type="match status" value="1"/>
</dbReference>
<dbReference type="NCBIfam" id="TIGR03635">
    <property type="entry name" value="uS17_bact"/>
    <property type="match status" value="1"/>
</dbReference>
<dbReference type="PANTHER" id="PTHR10744">
    <property type="entry name" value="40S RIBOSOMAL PROTEIN S11 FAMILY MEMBER"/>
    <property type="match status" value="1"/>
</dbReference>
<dbReference type="PANTHER" id="PTHR10744:SF1">
    <property type="entry name" value="SMALL RIBOSOMAL SUBUNIT PROTEIN US17M"/>
    <property type="match status" value="1"/>
</dbReference>
<dbReference type="Pfam" id="PF00366">
    <property type="entry name" value="Ribosomal_S17"/>
    <property type="match status" value="1"/>
</dbReference>
<dbReference type="PRINTS" id="PR00973">
    <property type="entry name" value="RIBOSOMALS17"/>
</dbReference>
<dbReference type="SUPFAM" id="SSF50249">
    <property type="entry name" value="Nucleic acid-binding proteins"/>
    <property type="match status" value="1"/>
</dbReference>
<dbReference type="PROSITE" id="PS00056">
    <property type="entry name" value="RIBOSOMAL_S17"/>
    <property type="match status" value="1"/>
</dbReference>
<proteinExistence type="inferred from homology"/>
<evidence type="ECO:0000255" key="1">
    <source>
        <dbReference type="HAMAP-Rule" id="MF_01345"/>
    </source>
</evidence>
<evidence type="ECO:0000305" key="2"/>
<reference key="1">
    <citation type="submission" date="2007-04" db="EMBL/GenBank/DDBJ databases">
        <title>Genome sequence of the thermophilic hydrogen-producing bacterium Caldicellulosiruptor saccharolyticus DSM 8903.</title>
        <authorList>
            <person name="Copeland A."/>
            <person name="Lucas S."/>
            <person name="Lapidus A."/>
            <person name="Barry K."/>
            <person name="Detter J.C."/>
            <person name="Glavina del Rio T."/>
            <person name="Hammon N."/>
            <person name="Israni S."/>
            <person name="Dalin E."/>
            <person name="Tice H."/>
            <person name="Pitluck S."/>
            <person name="Kiss H."/>
            <person name="Brettin T."/>
            <person name="Bruce D."/>
            <person name="Han C."/>
            <person name="Schmutz J."/>
            <person name="Larimer F."/>
            <person name="Land M."/>
            <person name="Hauser L."/>
            <person name="Kyrpides N."/>
            <person name="Lykidis A."/>
            <person name="van de Werken H.J.G."/>
            <person name="Verhaart M.R.A."/>
            <person name="VanFossen A.L."/>
            <person name="Lewis D.L."/>
            <person name="Nichols J.D."/>
            <person name="Goorissen H.P."/>
            <person name="van Niel E.W.J."/>
            <person name="Stams F.J.M."/>
            <person name="Willquist K.U."/>
            <person name="Ward D.E."/>
            <person name="van der Oost J."/>
            <person name="Kelly R.M."/>
            <person name="Kengen S.M.W."/>
            <person name="Richardson P."/>
        </authorList>
    </citation>
    <scope>NUCLEOTIDE SEQUENCE [LARGE SCALE GENOMIC DNA]</scope>
    <source>
        <strain>ATCC 43494 / DSM 8903 / Tp8T 6331</strain>
    </source>
</reference>
<accession>A4XLS1</accession>